<evidence type="ECO:0000255" key="1">
    <source>
        <dbReference type="HAMAP-Rule" id="MF_00144"/>
    </source>
</evidence>
<name>MNMA_LEVBA</name>
<protein>
    <recommendedName>
        <fullName evidence="1">tRNA-specific 2-thiouridylase MnmA</fullName>
        <ecNumber evidence="1">2.8.1.13</ecNumber>
    </recommendedName>
</protein>
<dbReference type="EC" id="2.8.1.13" evidence="1"/>
<dbReference type="EMBL" id="CP000416">
    <property type="protein sequence ID" value="ABJ64532.1"/>
    <property type="molecule type" value="Genomic_DNA"/>
</dbReference>
<dbReference type="RefSeq" id="WP_011668105.1">
    <property type="nucleotide sequence ID" value="NC_008497.1"/>
</dbReference>
<dbReference type="SMR" id="Q03QJ0"/>
<dbReference type="STRING" id="387344.LVIS_1434"/>
<dbReference type="KEGG" id="lbr:LVIS_1434"/>
<dbReference type="PATRIC" id="fig|387344.15.peg.1371"/>
<dbReference type="eggNOG" id="COG0482">
    <property type="taxonomic scope" value="Bacteria"/>
</dbReference>
<dbReference type="HOGENOM" id="CLU_035188_1_0_9"/>
<dbReference type="Proteomes" id="UP000001652">
    <property type="component" value="Chromosome"/>
</dbReference>
<dbReference type="GO" id="GO:0005737">
    <property type="term" value="C:cytoplasm"/>
    <property type="evidence" value="ECO:0007669"/>
    <property type="project" value="UniProtKB-SubCell"/>
</dbReference>
<dbReference type="GO" id="GO:0005524">
    <property type="term" value="F:ATP binding"/>
    <property type="evidence" value="ECO:0007669"/>
    <property type="project" value="UniProtKB-KW"/>
</dbReference>
<dbReference type="GO" id="GO:0000049">
    <property type="term" value="F:tRNA binding"/>
    <property type="evidence" value="ECO:0007669"/>
    <property type="project" value="UniProtKB-KW"/>
</dbReference>
<dbReference type="GO" id="GO:0103016">
    <property type="term" value="F:tRNA-uridine 2-sulfurtransferase activity"/>
    <property type="evidence" value="ECO:0007669"/>
    <property type="project" value="UniProtKB-EC"/>
</dbReference>
<dbReference type="GO" id="GO:0002143">
    <property type="term" value="P:tRNA wobble position uridine thiolation"/>
    <property type="evidence" value="ECO:0007669"/>
    <property type="project" value="TreeGrafter"/>
</dbReference>
<dbReference type="CDD" id="cd01998">
    <property type="entry name" value="MnmA_TRMU-like"/>
    <property type="match status" value="1"/>
</dbReference>
<dbReference type="FunFam" id="2.30.30.280:FF:000001">
    <property type="entry name" value="tRNA-specific 2-thiouridylase MnmA"/>
    <property type="match status" value="1"/>
</dbReference>
<dbReference type="FunFam" id="2.40.30.10:FF:000023">
    <property type="entry name" value="tRNA-specific 2-thiouridylase MnmA"/>
    <property type="match status" value="1"/>
</dbReference>
<dbReference type="FunFam" id="3.40.50.620:FF:000004">
    <property type="entry name" value="tRNA-specific 2-thiouridylase MnmA"/>
    <property type="match status" value="1"/>
</dbReference>
<dbReference type="Gene3D" id="2.30.30.280">
    <property type="entry name" value="Adenine nucleotide alpha hydrolases-like domains"/>
    <property type="match status" value="1"/>
</dbReference>
<dbReference type="Gene3D" id="3.40.50.620">
    <property type="entry name" value="HUPs"/>
    <property type="match status" value="1"/>
</dbReference>
<dbReference type="Gene3D" id="2.40.30.10">
    <property type="entry name" value="Translation factors"/>
    <property type="match status" value="1"/>
</dbReference>
<dbReference type="HAMAP" id="MF_00144">
    <property type="entry name" value="tRNA_thiouridyl_MnmA"/>
    <property type="match status" value="1"/>
</dbReference>
<dbReference type="InterPro" id="IPR004506">
    <property type="entry name" value="MnmA-like"/>
</dbReference>
<dbReference type="InterPro" id="IPR046885">
    <property type="entry name" value="MnmA-like_C"/>
</dbReference>
<dbReference type="InterPro" id="IPR046884">
    <property type="entry name" value="MnmA-like_central"/>
</dbReference>
<dbReference type="InterPro" id="IPR023382">
    <property type="entry name" value="MnmA-like_central_sf"/>
</dbReference>
<dbReference type="InterPro" id="IPR014729">
    <property type="entry name" value="Rossmann-like_a/b/a_fold"/>
</dbReference>
<dbReference type="NCBIfam" id="NF001138">
    <property type="entry name" value="PRK00143.1"/>
    <property type="match status" value="1"/>
</dbReference>
<dbReference type="NCBIfam" id="TIGR00420">
    <property type="entry name" value="trmU"/>
    <property type="match status" value="1"/>
</dbReference>
<dbReference type="PANTHER" id="PTHR11933:SF5">
    <property type="entry name" value="MITOCHONDRIAL TRNA-SPECIFIC 2-THIOURIDYLASE 1"/>
    <property type="match status" value="1"/>
</dbReference>
<dbReference type="PANTHER" id="PTHR11933">
    <property type="entry name" value="TRNA 5-METHYLAMINOMETHYL-2-THIOURIDYLATE -METHYLTRANSFERASE"/>
    <property type="match status" value="1"/>
</dbReference>
<dbReference type="Pfam" id="PF03054">
    <property type="entry name" value="tRNA_Me_trans"/>
    <property type="match status" value="1"/>
</dbReference>
<dbReference type="Pfam" id="PF20258">
    <property type="entry name" value="tRNA_Me_trans_C"/>
    <property type="match status" value="1"/>
</dbReference>
<dbReference type="Pfam" id="PF20259">
    <property type="entry name" value="tRNA_Me_trans_M"/>
    <property type="match status" value="1"/>
</dbReference>
<dbReference type="SUPFAM" id="SSF52402">
    <property type="entry name" value="Adenine nucleotide alpha hydrolases-like"/>
    <property type="match status" value="1"/>
</dbReference>
<organism>
    <name type="scientific">Levilactobacillus brevis (strain ATCC 367 / BCRC 12310 / CIP 105137 / JCM 1170 / LMG 11437 / NCIMB 947 / NCTC 947)</name>
    <name type="common">Lactobacillus brevis</name>
    <dbReference type="NCBI Taxonomy" id="387344"/>
    <lineage>
        <taxon>Bacteria</taxon>
        <taxon>Bacillati</taxon>
        <taxon>Bacillota</taxon>
        <taxon>Bacilli</taxon>
        <taxon>Lactobacillales</taxon>
        <taxon>Lactobacillaceae</taxon>
        <taxon>Levilactobacillus</taxon>
    </lineage>
</organism>
<keyword id="KW-0067">ATP-binding</keyword>
<keyword id="KW-0963">Cytoplasm</keyword>
<keyword id="KW-1015">Disulfide bond</keyword>
<keyword id="KW-0547">Nucleotide-binding</keyword>
<keyword id="KW-1185">Reference proteome</keyword>
<keyword id="KW-0694">RNA-binding</keyword>
<keyword id="KW-0808">Transferase</keyword>
<keyword id="KW-0819">tRNA processing</keyword>
<keyword id="KW-0820">tRNA-binding</keyword>
<reference key="1">
    <citation type="journal article" date="2006" name="Proc. Natl. Acad. Sci. U.S.A.">
        <title>Comparative genomics of the lactic acid bacteria.</title>
        <authorList>
            <person name="Makarova K.S."/>
            <person name="Slesarev A."/>
            <person name="Wolf Y.I."/>
            <person name="Sorokin A."/>
            <person name="Mirkin B."/>
            <person name="Koonin E.V."/>
            <person name="Pavlov A."/>
            <person name="Pavlova N."/>
            <person name="Karamychev V."/>
            <person name="Polouchine N."/>
            <person name="Shakhova V."/>
            <person name="Grigoriev I."/>
            <person name="Lou Y."/>
            <person name="Rohksar D."/>
            <person name="Lucas S."/>
            <person name="Huang K."/>
            <person name="Goodstein D.M."/>
            <person name="Hawkins T."/>
            <person name="Plengvidhya V."/>
            <person name="Welker D."/>
            <person name="Hughes J."/>
            <person name="Goh Y."/>
            <person name="Benson A."/>
            <person name="Baldwin K."/>
            <person name="Lee J.-H."/>
            <person name="Diaz-Muniz I."/>
            <person name="Dosti B."/>
            <person name="Smeianov V."/>
            <person name="Wechter W."/>
            <person name="Barabote R."/>
            <person name="Lorca G."/>
            <person name="Altermann E."/>
            <person name="Barrangou R."/>
            <person name="Ganesan B."/>
            <person name="Xie Y."/>
            <person name="Rawsthorne H."/>
            <person name="Tamir D."/>
            <person name="Parker C."/>
            <person name="Breidt F."/>
            <person name="Broadbent J.R."/>
            <person name="Hutkins R."/>
            <person name="O'Sullivan D."/>
            <person name="Steele J."/>
            <person name="Unlu G."/>
            <person name="Saier M.H. Jr."/>
            <person name="Klaenhammer T."/>
            <person name="Richardson P."/>
            <person name="Kozyavkin S."/>
            <person name="Weimer B.C."/>
            <person name="Mills D.A."/>
        </authorList>
    </citation>
    <scope>NUCLEOTIDE SEQUENCE [LARGE SCALE GENOMIC DNA]</scope>
    <source>
        <strain>ATCC 367 / BCRC 12310 / CIP 105137 / JCM 1170 / LMG 11437 / NCIMB 947 / NCTC 947</strain>
    </source>
</reference>
<feature type="chain" id="PRO_1000009530" description="tRNA-specific 2-thiouridylase MnmA">
    <location>
        <begin position="1"/>
        <end position="375"/>
    </location>
</feature>
<feature type="region of interest" description="Interaction with target base in tRNA" evidence="1">
    <location>
        <begin position="98"/>
        <end position="100"/>
    </location>
</feature>
<feature type="region of interest" description="Interaction with tRNA" evidence="1">
    <location>
        <begin position="150"/>
        <end position="152"/>
    </location>
</feature>
<feature type="region of interest" description="Interaction with tRNA" evidence="1">
    <location>
        <begin position="312"/>
        <end position="313"/>
    </location>
</feature>
<feature type="active site" description="Nucleophile" evidence="1">
    <location>
        <position position="103"/>
    </location>
</feature>
<feature type="active site" description="Cysteine persulfide intermediate" evidence="1">
    <location>
        <position position="200"/>
    </location>
</feature>
<feature type="binding site" evidence="1">
    <location>
        <begin position="12"/>
        <end position="19"/>
    </location>
    <ligand>
        <name>ATP</name>
        <dbReference type="ChEBI" id="CHEBI:30616"/>
    </ligand>
</feature>
<feature type="binding site" evidence="1">
    <location>
        <position position="38"/>
    </location>
    <ligand>
        <name>ATP</name>
        <dbReference type="ChEBI" id="CHEBI:30616"/>
    </ligand>
</feature>
<feature type="binding site" evidence="1">
    <location>
        <position position="127"/>
    </location>
    <ligand>
        <name>ATP</name>
        <dbReference type="ChEBI" id="CHEBI:30616"/>
    </ligand>
</feature>
<feature type="site" description="Interaction with tRNA" evidence="1">
    <location>
        <position position="128"/>
    </location>
</feature>
<feature type="site" description="Interaction with tRNA" evidence="1">
    <location>
        <position position="346"/>
    </location>
</feature>
<feature type="disulfide bond" description="Alternate" evidence="1">
    <location>
        <begin position="103"/>
        <end position="200"/>
    </location>
</feature>
<sequence>MQDNSQTRVVVGMSGGVDSSVVALRLKQQGYDVIGVFMKNWDDTDENGVCTATEDYKDVAKVAAKIGIPYYSVNFEKEYWDRVFTYFLDEYKKGRTPNPDVICNKEIKFKAFLDYALELGADYIATGHYAQLTRDEAGHAHLMRAVDQNKDQTYFLSQLSTEQLDRVMFPIGDLVKPQVREIAKEAGLATAEKKDSMGICFIGEKGHFKDFLKTYLPAKAGDMMTVDGEIKGHHAGLMYYTIGQRKGLGIGGDGIDNEPWFVIGKDLQKNILYVGKGYHNPHLYATHLSASDIHWVNTIDRGSDFHCTAKFRYRQKDTGVTVHLNDDGQQVTVEFDDPARAITPGQAVVFYNGDECLGSAIIDAAYNQERELQLI</sequence>
<comment type="function">
    <text evidence="1">Catalyzes the 2-thiolation of uridine at the wobble position (U34) of tRNA, leading to the formation of s(2)U34.</text>
</comment>
<comment type="catalytic activity">
    <reaction evidence="1">
        <text>S-sulfanyl-L-cysteinyl-[protein] + uridine(34) in tRNA + AH2 + ATP = 2-thiouridine(34) in tRNA + L-cysteinyl-[protein] + A + AMP + diphosphate + H(+)</text>
        <dbReference type="Rhea" id="RHEA:47032"/>
        <dbReference type="Rhea" id="RHEA-COMP:10131"/>
        <dbReference type="Rhea" id="RHEA-COMP:11726"/>
        <dbReference type="Rhea" id="RHEA-COMP:11727"/>
        <dbReference type="Rhea" id="RHEA-COMP:11728"/>
        <dbReference type="ChEBI" id="CHEBI:13193"/>
        <dbReference type="ChEBI" id="CHEBI:15378"/>
        <dbReference type="ChEBI" id="CHEBI:17499"/>
        <dbReference type="ChEBI" id="CHEBI:29950"/>
        <dbReference type="ChEBI" id="CHEBI:30616"/>
        <dbReference type="ChEBI" id="CHEBI:33019"/>
        <dbReference type="ChEBI" id="CHEBI:61963"/>
        <dbReference type="ChEBI" id="CHEBI:65315"/>
        <dbReference type="ChEBI" id="CHEBI:87170"/>
        <dbReference type="ChEBI" id="CHEBI:456215"/>
        <dbReference type="EC" id="2.8.1.13"/>
    </reaction>
</comment>
<comment type="subcellular location">
    <subcellularLocation>
        <location evidence="1">Cytoplasm</location>
    </subcellularLocation>
</comment>
<comment type="similarity">
    <text evidence="1">Belongs to the MnmA/TRMU family.</text>
</comment>
<proteinExistence type="inferred from homology"/>
<accession>Q03QJ0</accession>
<gene>
    <name evidence="1" type="primary">mnmA</name>
    <name type="synonym">trmU</name>
    <name type="ordered locus">LVIS_1434</name>
</gene>